<sequence>MNDSAHIDYARYDHIRPLLWTGDALELLDQRKLPFVVEHVRCDTSDAVAEAIHSLAVRGAPAIGIAAGWGVALAARDIAADDGNAALQKLEPALLRLNAARPTAVNLAWALMRMRRVLGAAGADWRAVIAREAQAIADEDLAANRHMGALGAALIAPGSGVLTHCNTGSLATAGFGTALGVIRAGMAQQRIAKVFAGETRPWLQGARLTVWELQQDGIDATLIADSAASHLMKSGLVQWVIVGADRICANGDTANKIGTYQLAIAARHHGVKFMVVAPSSTVDMATASGDQIEIEQRDPGELFGVGGVRTVADGIHAWNPVFDVTPGDLIDAIVTERGVIAQPDQARMQAAFGN</sequence>
<organism>
    <name type="scientific">Xanthomonas oryzae pv. oryzae (strain MAFF 311018)</name>
    <dbReference type="NCBI Taxonomy" id="342109"/>
    <lineage>
        <taxon>Bacteria</taxon>
        <taxon>Pseudomonadati</taxon>
        <taxon>Pseudomonadota</taxon>
        <taxon>Gammaproteobacteria</taxon>
        <taxon>Lysobacterales</taxon>
        <taxon>Lysobacteraceae</taxon>
        <taxon>Xanthomonas</taxon>
    </lineage>
</organism>
<accession>Q2P337</accession>
<feature type="chain" id="PRO_0000357273" description="Methylthioribose-1-phosphate isomerase">
    <location>
        <begin position="1"/>
        <end position="354"/>
    </location>
</feature>
<feature type="active site" description="Proton donor" evidence="1">
    <location>
        <position position="245"/>
    </location>
</feature>
<feature type="binding site" evidence="1">
    <location>
        <begin position="58"/>
        <end position="60"/>
    </location>
    <ligand>
        <name>substrate</name>
    </ligand>
</feature>
<feature type="binding site" evidence="1">
    <location>
        <position position="101"/>
    </location>
    <ligand>
        <name>substrate</name>
    </ligand>
</feature>
<feature type="binding site" evidence="1">
    <location>
        <position position="204"/>
    </location>
    <ligand>
        <name>substrate</name>
    </ligand>
</feature>
<feature type="binding site" evidence="1">
    <location>
        <begin position="255"/>
        <end position="256"/>
    </location>
    <ligand>
        <name>substrate</name>
    </ligand>
</feature>
<feature type="site" description="Transition state stabilizer" evidence="1">
    <location>
        <position position="165"/>
    </location>
</feature>
<comment type="function">
    <text evidence="1">Catalyzes the interconversion of methylthioribose-1-phosphate (MTR-1-P) into methylthioribulose-1-phosphate (MTRu-1-P).</text>
</comment>
<comment type="catalytic activity">
    <reaction evidence="1">
        <text>5-(methylsulfanyl)-alpha-D-ribose 1-phosphate = 5-(methylsulfanyl)-D-ribulose 1-phosphate</text>
        <dbReference type="Rhea" id="RHEA:19989"/>
        <dbReference type="ChEBI" id="CHEBI:58533"/>
        <dbReference type="ChEBI" id="CHEBI:58548"/>
        <dbReference type="EC" id="5.3.1.23"/>
    </reaction>
</comment>
<comment type="pathway">
    <text evidence="1">Amino-acid biosynthesis; L-methionine biosynthesis via salvage pathway; L-methionine from S-methyl-5-thio-alpha-D-ribose 1-phosphate: step 1/6.</text>
</comment>
<comment type="similarity">
    <text evidence="2">Belongs to the eIF-2B alpha/beta/delta subunits family. MtnA subfamily.</text>
</comment>
<evidence type="ECO:0000255" key="1">
    <source>
        <dbReference type="HAMAP-Rule" id="MF_01678"/>
    </source>
</evidence>
<evidence type="ECO:0000305" key="2"/>
<gene>
    <name evidence="1" type="primary">mtnA</name>
    <name type="ordered locus">XOO2285</name>
</gene>
<reference key="1">
    <citation type="journal article" date="2005" name="Jpn. Agric. Res. Q.">
        <title>Genome sequence of Xanthomonas oryzae pv. oryzae suggests contribution of large numbers of effector genes and insertion sequences to its race diversity.</title>
        <authorList>
            <person name="Ochiai H."/>
            <person name="Inoue Y."/>
            <person name="Takeya M."/>
            <person name="Sasaki A."/>
            <person name="Kaku H."/>
        </authorList>
    </citation>
    <scope>NUCLEOTIDE SEQUENCE [LARGE SCALE GENOMIC DNA]</scope>
    <source>
        <strain>MAFF 311018</strain>
    </source>
</reference>
<proteinExistence type="inferred from homology"/>
<dbReference type="EC" id="5.3.1.23" evidence="1"/>
<dbReference type="EMBL" id="AP008229">
    <property type="protein sequence ID" value="BAE69040.1"/>
    <property type="molecule type" value="Genomic_DNA"/>
</dbReference>
<dbReference type="RefSeq" id="WP_011259069.1">
    <property type="nucleotide sequence ID" value="NC_007705.1"/>
</dbReference>
<dbReference type="SMR" id="Q2P337"/>
<dbReference type="KEGG" id="xom:XOO2285"/>
<dbReference type="HOGENOM" id="CLU_016218_1_2_6"/>
<dbReference type="UniPathway" id="UPA00904">
    <property type="reaction ID" value="UER00874"/>
</dbReference>
<dbReference type="GO" id="GO:0046523">
    <property type="term" value="F:S-methyl-5-thioribose-1-phosphate isomerase activity"/>
    <property type="evidence" value="ECO:0007669"/>
    <property type="project" value="UniProtKB-UniRule"/>
</dbReference>
<dbReference type="GO" id="GO:0019509">
    <property type="term" value="P:L-methionine salvage from methylthioadenosine"/>
    <property type="evidence" value="ECO:0007669"/>
    <property type="project" value="UniProtKB-UniRule"/>
</dbReference>
<dbReference type="FunFam" id="1.20.120.420:FF:000007">
    <property type="entry name" value="Methylthioribose-1-phosphate isomerase"/>
    <property type="match status" value="1"/>
</dbReference>
<dbReference type="FunFam" id="3.40.50.10470:FF:000006">
    <property type="entry name" value="Methylthioribose-1-phosphate isomerase"/>
    <property type="match status" value="1"/>
</dbReference>
<dbReference type="Gene3D" id="1.20.120.420">
    <property type="entry name" value="translation initiation factor eif-2b, domain 1"/>
    <property type="match status" value="1"/>
</dbReference>
<dbReference type="Gene3D" id="3.40.50.10470">
    <property type="entry name" value="Translation initiation factor eif-2b, domain 2"/>
    <property type="match status" value="1"/>
</dbReference>
<dbReference type="HAMAP" id="MF_01678">
    <property type="entry name" value="Salvage_MtnA"/>
    <property type="match status" value="1"/>
</dbReference>
<dbReference type="InterPro" id="IPR000649">
    <property type="entry name" value="IF-2B-related"/>
</dbReference>
<dbReference type="InterPro" id="IPR005251">
    <property type="entry name" value="IF-M1Pi"/>
</dbReference>
<dbReference type="InterPro" id="IPR042529">
    <property type="entry name" value="IF_2B-like_C"/>
</dbReference>
<dbReference type="InterPro" id="IPR011559">
    <property type="entry name" value="Initiation_fac_2B_a/b/d"/>
</dbReference>
<dbReference type="InterPro" id="IPR027363">
    <property type="entry name" value="M1Pi_N"/>
</dbReference>
<dbReference type="InterPro" id="IPR037171">
    <property type="entry name" value="NagB/RpiA_transferase-like"/>
</dbReference>
<dbReference type="NCBIfam" id="TIGR00524">
    <property type="entry name" value="eIF-2B_rel"/>
    <property type="match status" value="1"/>
</dbReference>
<dbReference type="NCBIfam" id="NF004326">
    <property type="entry name" value="PRK05720.1"/>
    <property type="match status" value="1"/>
</dbReference>
<dbReference type="NCBIfam" id="TIGR00512">
    <property type="entry name" value="salvage_mtnA"/>
    <property type="match status" value="1"/>
</dbReference>
<dbReference type="PANTHER" id="PTHR43475">
    <property type="entry name" value="METHYLTHIORIBOSE-1-PHOSPHATE ISOMERASE"/>
    <property type="match status" value="1"/>
</dbReference>
<dbReference type="PANTHER" id="PTHR43475:SF1">
    <property type="entry name" value="METHYLTHIORIBOSE-1-PHOSPHATE ISOMERASE"/>
    <property type="match status" value="1"/>
</dbReference>
<dbReference type="Pfam" id="PF01008">
    <property type="entry name" value="IF-2B"/>
    <property type="match status" value="1"/>
</dbReference>
<dbReference type="SUPFAM" id="SSF100950">
    <property type="entry name" value="NagB/RpiA/CoA transferase-like"/>
    <property type="match status" value="1"/>
</dbReference>
<keyword id="KW-0028">Amino-acid biosynthesis</keyword>
<keyword id="KW-0413">Isomerase</keyword>
<keyword id="KW-0486">Methionine biosynthesis</keyword>
<protein>
    <recommendedName>
        <fullName evidence="1">Methylthioribose-1-phosphate isomerase</fullName>
        <shortName evidence="1">M1Pi</shortName>
        <shortName evidence="1">MTR-1-P isomerase</shortName>
        <ecNumber evidence="1">5.3.1.23</ecNumber>
    </recommendedName>
    <alternativeName>
        <fullName evidence="1">S-methyl-5-thioribose-1-phosphate isomerase</fullName>
    </alternativeName>
</protein>
<name>MTNA_XANOM</name>